<comment type="function">
    <text evidence="1">Specifically methylates position 2 of adenine 2503 in 23S rRNA and position 2 of adenine 37 in tRNAs. m2A2503 modification seems to play a crucial role in the proofreading step occurring at the peptidyl transferase center and thus would serve to optimize ribosomal fidelity.</text>
</comment>
<comment type="catalytic activity">
    <reaction evidence="1">
        <text>adenosine(2503) in 23S rRNA + 2 reduced [2Fe-2S]-[ferredoxin] + 2 S-adenosyl-L-methionine = 2-methyladenosine(2503) in 23S rRNA + 5'-deoxyadenosine + L-methionine + 2 oxidized [2Fe-2S]-[ferredoxin] + S-adenosyl-L-homocysteine</text>
        <dbReference type="Rhea" id="RHEA:42916"/>
        <dbReference type="Rhea" id="RHEA-COMP:10000"/>
        <dbReference type="Rhea" id="RHEA-COMP:10001"/>
        <dbReference type="Rhea" id="RHEA-COMP:10152"/>
        <dbReference type="Rhea" id="RHEA-COMP:10282"/>
        <dbReference type="ChEBI" id="CHEBI:17319"/>
        <dbReference type="ChEBI" id="CHEBI:33737"/>
        <dbReference type="ChEBI" id="CHEBI:33738"/>
        <dbReference type="ChEBI" id="CHEBI:57844"/>
        <dbReference type="ChEBI" id="CHEBI:57856"/>
        <dbReference type="ChEBI" id="CHEBI:59789"/>
        <dbReference type="ChEBI" id="CHEBI:74411"/>
        <dbReference type="ChEBI" id="CHEBI:74497"/>
        <dbReference type="EC" id="2.1.1.192"/>
    </reaction>
</comment>
<comment type="catalytic activity">
    <reaction evidence="1">
        <text>adenosine(37) in tRNA + 2 reduced [2Fe-2S]-[ferredoxin] + 2 S-adenosyl-L-methionine = 2-methyladenosine(37) in tRNA + 5'-deoxyadenosine + L-methionine + 2 oxidized [2Fe-2S]-[ferredoxin] + S-adenosyl-L-homocysteine</text>
        <dbReference type="Rhea" id="RHEA:43332"/>
        <dbReference type="Rhea" id="RHEA-COMP:10000"/>
        <dbReference type="Rhea" id="RHEA-COMP:10001"/>
        <dbReference type="Rhea" id="RHEA-COMP:10162"/>
        <dbReference type="Rhea" id="RHEA-COMP:10485"/>
        <dbReference type="ChEBI" id="CHEBI:17319"/>
        <dbReference type="ChEBI" id="CHEBI:33737"/>
        <dbReference type="ChEBI" id="CHEBI:33738"/>
        <dbReference type="ChEBI" id="CHEBI:57844"/>
        <dbReference type="ChEBI" id="CHEBI:57856"/>
        <dbReference type="ChEBI" id="CHEBI:59789"/>
        <dbReference type="ChEBI" id="CHEBI:74411"/>
        <dbReference type="ChEBI" id="CHEBI:74497"/>
        <dbReference type="EC" id="2.1.1.192"/>
    </reaction>
</comment>
<comment type="cofactor">
    <cofactor evidence="1">
        <name>[4Fe-4S] cluster</name>
        <dbReference type="ChEBI" id="CHEBI:49883"/>
    </cofactor>
    <text evidence="1">Binds 1 [4Fe-4S] cluster. The cluster is coordinated with 3 cysteines and an exchangeable S-adenosyl-L-methionine.</text>
</comment>
<comment type="subcellular location">
    <subcellularLocation>
        <location evidence="1">Cytoplasm</location>
    </subcellularLocation>
</comment>
<comment type="miscellaneous">
    <text evidence="1">Reaction proceeds by a ping-pong mechanism involving intermediate methylation of a conserved cysteine residue.</text>
</comment>
<comment type="similarity">
    <text evidence="1">Belongs to the radical SAM superfamily. RlmN family.</text>
</comment>
<gene>
    <name evidence="1" type="primary">rlmN</name>
    <name type="ordered locus">DMR_00680</name>
</gene>
<accession>C4XTP4</accession>
<protein>
    <recommendedName>
        <fullName evidence="1">Dual-specificity RNA methyltransferase RlmN</fullName>
        <ecNumber evidence="1">2.1.1.192</ecNumber>
    </recommendedName>
    <alternativeName>
        <fullName evidence="1">23S rRNA (adenine(2503)-C(2))-methyltransferase</fullName>
    </alternativeName>
    <alternativeName>
        <fullName evidence="1">23S rRNA m2A2503 methyltransferase</fullName>
    </alternativeName>
    <alternativeName>
        <fullName evidence="1">Ribosomal RNA large subunit methyltransferase N</fullName>
    </alternativeName>
    <alternativeName>
        <fullName evidence="1">tRNA (adenine(37)-C(2))-methyltransferase</fullName>
    </alternativeName>
    <alternativeName>
        <fullName evidence="1">tRNA m2A37 methyltransferase</fullName>
    </alternativeName>
</protein>
<reference key="1">
    <citation type="journal article" date="2009" name="Genome Res.">
        <title>Whole genome sequence of Desulfovibrio magneticus strain RS-1 revealed common gene clusters in magnetotactic bacteria.</title>
        <authorList>
            <person name="Nakazawa H."/>
            <person name="Arakaki A."/>
            <person name="Narita-Yamada S."/>
            <person name="Yashiro I."/>
            <person name="Jinno K."/>
            <person name="Aoki N."/>
            <person name="Tsuruyama A."/>
            <person name="Okamura Y."/>
            <person name="Tanikawa S."/>
            <person name="Fujita N."/>
            <person name="Takeyama H."/>
            <person name="Matsunaga T."/>
        </authorList>
    </citation>
    <scope>NUCLEOTIDE SEQUENCE [LARGE SCALE GENOMIC DNA]</scope>
    <source>
        <strain>ATCC 700980 / DSM 13731 / RS-1</strain>
    </source>
</reference>
<feature type="chain" id="PRO_1000216116" description="Dual-specificity RNA methyltransferase RlmN">
    <location>
        <begin position="1"/>
        <end position="351"/>
    </location>
</feature>
<feature type="domain" description="Radical SAM core" evidence="2">
    <location>
        <begin position="96"/>
        <end position="330"/>
    </location>
</feature>
<feature type="active site" description="Proton acceptor" evidence="1">
    <location>
        <position position="90"/>
    </location>
</feature>
<feature type="active site" description="S-methylcysteine intermediate" evidence="1">
    <location>
        <position position="335"/>
    </location>
</feature>
<feature type="binding site" evidence="1">
    <location>
        <position position="110"/>
    </location>
    <ligand>
        <name>[4Fe-4S] cluster</name>
        <dbReference type="ChEBI" id="CHEBI:49883"/>
        <note>4Fe-4S-S-AdoMet</note>
    </ligand>
</feature>
<feature type="binding site" evidence="1">
    <location>
        <position position="114"/>
    </location>
    <ligand>
        <name>[4Fe-4S] cluster</name>
        <dbReference type="ChEBI" id="CHEBI:49883"/>
        <note>4Fe-4S-S-AdoMet</note>
    </ligand>
</feature>
<feature type="binding site" evidence="1">
    <location>
        <position position="117"/>
    </location>
    <ligand>
        <name>[4Fe-4S] cluster</name>
        <dbReference type="ChEBI" id="CHEBI:49883"/>
        <note>4Fe-4S-S-AdoMet</note>
    </ligand>
</feature>
<feature type="binding site" evidence="1">
    <location>
        <begin position="162"/>
        <end position="163"/>
    </location>
    <ligand>
        <name>S-adenosyl-L-methionine</name>
        <dbReference type="ChEBI" id="CHEBI:59789"/>
    </ligand>
</feature>
<feature type="binding site" evidence="1">
    <location>
        <position position="194"/>
    </location>
    <ligand>
        <name>S-adenosyl-L-methionine</name>
        <dbReference type="ChEBI" id="CHEBI:59789"/>
    </ligand>
</feature>
<feature type="binding site" evidence="1">
    <location>
        <begin position="216"/>
        <end position="218"/>
    </location>
    <ligand>
        <name>S-adenosyl-L-methionine</name>
        <dbReference type="ChEBI" id="CHEBI:59789"/>
    </ligand>
</feature>
<feature type="binding site" evidence="1">
    <location>
        <position position="292"/>
    </location>
    <ligand>
        <name>S-adenosyl-L-methionine</name>
        <dbReference type="ChEBI" id="CHEBI:59789"/>
    </ligand>
</feature>
<feature type="disulfide bond" description="(transient)" evidence="1">
    <location>
        <begin position="103"/>
        <end position="335"/>
    </location>
</feature>
<dbReference type="EC" id="2.1.1.192" evidence="1"/>
<dbReference type="EMBL" id="AP010904">
    <property type="protein sequence ID" value="BAH73559.1"/>
    <property type="molecule type" value="Genomic_DNA"/>
</dbReference>
<dbReference type="RefSeq" id="WP_012749652.1">
    <property type="nucleotide sequence ID" value="NC_012796.1"/>
</dbReference>
<dbReference type="SMR" id="C4XTP4"/>
<dbReference type="STRING" id="573370.DMR_00680"/>
<dbReference type="KEGG" id="dma:DMR_00680"/>
<dbReference type="eggNOG" id="COG0820">
    <property type="taxonomic scope" value="Bacteria"/>
</dbReference>
<dbReference type="HOGENOM" id="CLU_029101_0_0_7"/>
<dbReference type="OrthoDB" id="9793973at2"/>
<dbReference type="Proteomes" id="UP000009071">
    <property type="component" value="Chromosome"/>
</dbReference>
<dbReference type="GO" id="GO:0005737">
    <property type="term" value="C:cytoplasm"/>
    <property type="evidence" value="ECO:0007669"/>
    <property type="project" value="UniProtKB-SubCell"/>
</dbReference>
<dbReference type="GO" id="GO:0051539">
    <property type="term" value="F:4 iron, 4 sulfur cluster binding"/>
    <property type="evidence" value="ECO:0007669"/>
    <property type="project" value="UniProtKB-UniRule"/>
</dbReference>
<dbReference type="GO" id="GO:0046872">
    <property type="term" value="F:metal ion binding"/>
    <property type="evidence" value="ECO:0007669"/>
    <property type="project" value="UniProtKB-KW"/>
</dbReference>
<dbReference type="GO" id="GO:0070040">
    <property type="term" value="F:rRNA (adenine(2503)-C2-)-methyltransferase activity"/>
    <property type="evidence" value="ECO:0007669"/>
    <property type="project" value="UniProtKB-UniRule"/>
</dbReference>
<dbReference type="GO" id="GO:0019843">
    <property type="term" value="F:rRNA binding"/>
    <property type="evidence" value="ECO:0007669"/>
    <property type="project" value="UniProtKB-UniRule"/>
</dbReference>
<dbReference type="GO" id="GO:0002935">
    <property type="term" value="F:tRNA (adenine(37)-C2)-methyltransferase activity"/>
    <property type="evidence" value="ECO:0007669"/>
    <property type="project" value="UniProtKB-UniRule"/>
</dbReference>
<dbReference type="GO" id="GO:0000049">
    <property type="term" value="F:tRNA binding"/>
    <property type="evidence" value="ECO:0007669"/>
    <property type="project" value="UniProtKB-UniRule"/>
</dbReference>
<dbReference type="GO" id="GO:0070475">
    <property type="term" value="P:rRNA base methylation"/>
    <property type="evidence" value="ECO:0007669"/>
    <property type="project" value="UniProtKB-UniRule"/>
</dbReference>
<dbReference type="GO" id="GO:0030488">
    <property type="term" value="P:tRNA methylation"/>
    <property type="evidence" value="ECO:0007669"/>
    <property type="project" value="UniProtKB-UniRule"/>
</dbReference>
<dbReference type="CDD" id="cd01335">
    <property type="entry name" value="Radical_SAM"/>
    <property type="match status" value="1"/>
</dbReference>
<dbReference type="Gene3D" id="1.10.150.530">
    <property type="match status" value="1"/>
</dbReference>
<dbReference type="Gene3D" id="3.20.20.70">
    <property type="entry name" value="Aldolase class I"/>
    <property type="match status" value="1"/>
</dbReference>
<dbReference type="HAMAP" id="MF_01849">
    <property type="entry name" value="RNA_methyltr_RlmN"/>
    <property type="match status" value="1"/>
</dbReference>
<dbReference type="InterPro" id="IPR013785">
    <property type="entry name" value="Aldolase_TIM"/>
</dbReference>
<dbReference type="InterPro" id="IPR040072">
    <property type="entry name" value="Methyltransferase_A"/>
</dbReference>
<dbReference type="InterPro" id="IPR048641">
    <property type="entry name" value="RlmN_N"/>
</dbReference>
<dbReference type="InterPro" id="IPR027492">
    <property type="entry name" value="RNA_MTrfase_RlmN"/>
</dbReference>
<dbReference type="InterPro" id="IPR004383">
    <property type="entry name" value="rRNA_lsu_MTrfase_RlmN/Cfr"/>
</dbReference>
<dbReference type="InterPro" id="IPR007197">
    <property type="entry name" value="rSAM"/>
</dbReference>
<dbReference type="NCBIfam" id="TIGR00048">
    <property type="entry name" value="rRNA_mod_RlmN"/>
    <property type="match status" value="1"/>
</dbReference>
<dbReference type="PANTHER" id="PTHR30544">
    <property type="entry name" value="23S RRNA METHYLTRANSFERASE"/>
    <property type="match status" value="1"/>
</dbReference>
<dbReference type="PANTHER" id="PTHR30544:SF5">
    <property type="entry name" value="RADICAL SAM CORE DOMAIN-CONTAINING PROTEIN"/>
    <property type="match status" value="1"/>
</dbReference>
<dbReference type="Pfam" id="PF04055">
    <property type="entry name" value="Radical_SAM"/>
    <property type="match status" value="1"/>
</dbReference>
<dbReference type="Pfam" id="PF21016">
    <property type="entry name" value="RlmN_N"/>
    <property type="match status" value="1"/>
</dbReference>
<dbReference type="PIRSF" id="PIRSF006004">
    <property type="entry name" value="CHP00048"/>
    <property type="match status" value="1"/>
</dbReference>
<dbReference type="SFLD" id="SFLDF00275">
    <property type="entry name" value="adenosine_C2_methyltransferase"/>
    <property type="match status" value="1"/>
</dbReference>
<dbReference type="SFLD" id="SFLDS00029">
    <property type="entry name" value="Radical_SAM"/>
    <property type="match status" value="1"/>
</dbReference>
<dbReference type="SUPFAM" id="SSF102114">
    <property type="entry name" value="Radical SAM enzymes"/>
    <property type="match status" value="1"/>
</dbReference>
<dbReference type="PROSITE" id="PS51918">
    <property type="entry name" value="RADICAL_SAM"/>
    <property type="match status" value="1"/>
</dbReference>
<organism>
    <name type="scientific">Solidesulfovibrio magneticus (strain ATCC 700980 / DSM 13731 / RS-1)</name>
    <name type="common">Desulfovibrio magneticus</name>
    <dbReference type="NCBI Taxonomy" id="573370"/>
    <lineage>
        <taxon>Bacteria</taxon>
        <taxon>Pseudomonadati</taxon>
        <taxon>Thermodesulfobacteriota</taxon>
        <taxon>Desulfovibrionia</taxon>
        <taxon>Desulfovibrionales</taxon>
        <taxon>Desulfovibrionaceae</taxon>
        <taxon>Solidesulfovibrio</taxon>
    </lineage>
</organism>
<evidence type="ECO:0000255" key="1">
    <source>
        <dbReference type="HAMAP-Rule" id="MF_01849"/>
    </source>
</evidence>
<evidence type="ECO:0000255" key="2">
    <source>
        <dbReference type="PROSITE-ProRule" id="PRU01266"/>
    </source>
</evidence>
<proteinExistence type="inferred from homology"/>
<keyword id="KW-0004">4Fe-4S</keyword>
<keyword id="KW-0963">Cytoplasm</keyword>
<keyword id="KW-1015">Disulfide bond</keyword>
<keyword id="KW-0408">Iron</keyword>
<keyword id="KW-0411">Iron-sulfur</keyword>
<keyword id="KW-0479">Metal-binding</keyword>
<keyword id="KW-0489">Methyltransferase</keyword>
<keyword id="KW-0698">rRNA processing</keyword>
<keyword id="KW-0949">S-adenosyl-L-methionine</keyword>
<keyword id="KW-0808">Transferase</keyword>
<keyword id="KW-0819">tRNA processing</keyword>
<name>RLMN_SOLM1</name>
<sequence>MTNLIDLTFHELESLIVSLGEPPYRARQVWQWLWQKRCREIAGMTDVSKALRARLEEVAEIRWPVVEMVRESRDGTVKFLLALDDGERVECVLIPEKDHYTACLSTQVGCAMGCGFCATGMLGFRRNMTPGEMLGQVLVGRQYLTDKGVELGLRNLVFMGMGEPLLNYENLLKTLEALHHPQGLDFSGRRITVSTAGVARHLLDLGRTGLCSLAISLHAPTQAQRERIMPGAARLELDKLMDLLAQYPLKPRERLTFEYLLLAGVNDADADARELVRLLSRVKAKVNLIVFNATPGLPYSPPDEARVLAFQDILKSKGLTATLRKSKGSDIAAACGQLRAECDGEGEGEGK</sequence>